<dbReference type="EMBL" id="Z46241">
    <property type="protein sequence ID" value="CAA86319.1"/>
    <property type="molecule type" value="Genomic_DNA"/>
</dbReference>
<dbReference type="PIR" id="T19826">
    <property type="entry name" value="T19826"/>
</dbReference>
<dbReference type="RefSeq" id="NP_497993.1">
    <property type="nucleotide sequence ID" value="NM_065592.3"/>
</dbReference>
<dbReference type="SMR" id="Q18510"/>
<dbReference type="BioGRID" id="48141">
    <property type="interactions" value="1"/>
</dbReference>
<dbReference type="FunCoup" id="Q18510">
    <property type="interactions" value="582"/>
</dbReference>
<dbReference type="STRING" id="6239.C38D4.8.1"/>
<dbReference type="PaxDb" id="6239-C38D4.8"/>
<dbReference type="EnsemblMetazoa" id="C38D4.8.1">
    <property type="protein sequence ID" value="C38D4.8.1"/>
    <property type="gene ID" value="WBGene00000193"/>
</dbReference>
<dbReference type="GeneID" id="183311"/>
<dbReference type="KEGG" id="cel:CELE_C38D4.8"/>
<dbReference type="UCSC" id="C38D4.8">
    <property type="organism name" value="c. elegans"/>
</dbReference>
<dbReference type="AGR" id="WB:WBGene00000193"/>
<dbReference type="CTD" id="183311"/>
<dbReference type="WormBase" id="C38D4.8">
    <property type="protein sequence ID" value="CE00921"/>
    <property type="gene ID" value="WBGene00000193"/>
    <property type="gene designation" value="arl-6"/>
</dbReference>
<dbReference type="eggNOG" id="KOG0070">
    <property type="taxonomic scope" value="Eukaryota"/>
</dbReference>
<dbReference type="GeneTree" id="ENSGT00940000156459"/>
<dbReference type="HOGENOM" id="CLU_040729_9_1_1"/>
<dbReference type="InParanoid" id="Q18510"/>
<dbReference type="OMA" id="IHSTCAL"/>
<dbReference type="OrthoDB" id="442317at2759"/>
<dbReference type="PhylomeDB" id="Q18510"/>
<dbReference type="Reactome" id="R-CEL-5620922">
    <property type="pathway name" value="BBSome-mediated cargo-targeting to cilium"/>
</dbReference>
<dbReference type="PRO" id="PR:Q18510"/>
<dbReference type="Proteomes" id="UP000001940">
    <property type="component" value="Chromosome III"/>
</dbReference>
<dbReference type="Bgee" id="WBGene00000193">
    <property type="expression patterns" value="Expressed in pharyngeal muscle cell (C elegans) and 3 other cell types or tissues"/>
</dbReference>
<dbReference type="GO" id="GO:0005930">
    <property type="term" value="C:axoneme"/>
    <property type="evidence" value="ECO:0000314"/>
    <property type="project" value="WormBase"/>
</dbReference>
<dbReference type="GO" id="GO:0005737">
    <property type="term" value="C:cytoplasm"/>
    <property type="evidence" value="ECO:0000318"/>
    <property type="project" value="GO_Central"/>
</dbReference>
<dbReference type="GO" id="GO:0005829">
    <property type="term" value="C:cytosol"/>
    <property type="evidence" value="ECO:0000314"/>
    <property type="project" value="UniProtKB"/>
</dbReference>
<dbReference type="GO" id="GO:0030425">
    <property type="term" value="C:dendrite"/>
    <property type="evidence" value="ECO:0000314"/>
    <property type="project" value="WormBase"/>
</dbReference>
<dbReference type="GO" id="GO:0005525">
    <property type="term" value="F:GTP binding"/>
    <property type="evidence" value="ECO:0000318"/>
    <property type="project" value="GO_Central"/>
</dbReference>
<dbReference type="GO" id="GO:0003924">
    <property type="term" value="F:GTPase activity"/>
    <property type="evidence" value="ECO:0000314"/>
    <property type="project" value="WormBase"/>
</dbReference>
<dbReference type="GO" id="GO:0060271">
    <property type="term" value="P:cilium assembly"/>
    <property type="evidence" value="ECO:0000318"/>
    <property type="project" value="GO_Central"/>
</dbReference>
<dbReference type="GO" id="GO:0006886">
    <property type="term" value="P:intracellular protein transport"/>
    <property type="evidence" value="ECO:0000318"/>
    <property type="project" value="GO_Central"/>
</dbReference>
<dbReference type="GO" id="GO:0046907">
    <property type="term" value="P:intracellular transport"/>
    <property type="evidence" value="ECO:0000314"/>
    <property type="project" value="WormBase"/>
</dbReference>
<dbReference type="GO" id="GO:0036499">
    <property type="term" value="P:PERK-mediated unfolded protein response"/>
    <property type="evidence" value="ECO:0007007"/>
    <property type="project" value="WormBase"/>
</dbReference>
<dbReference type="GO" id="GO:0061512">
    <property type="term" value="P:protein localization to cilium"/>
    <property type="evidence" value="ECO:0000318"/>
    <property type="project" value="GO_Central"/>
</dbReference>
<dbReference type="GO" id="GO:0016192">
    <property type="term" value="P:vesicle-mediated transport"/>
    <property type="evidence" value="ECO:0000318"/>
    <property type="project" value="GO_Central"/>
</dbReference>
<dbReference type="CDD" id="cd04157">
    <property type="entry name" value="Arl6"/>
    <property type="match status" value="1"/>
</dbReference>
<dbReference type="FunFam" id="3.40.50.300:FF:001166">
    <property type="entry name" value="ADP-ribosylation factor D"/>
    <property type="match status" value="1"/>
</dbReference>
<dbReference type="Gene3D" id="3.40.50.300">
    <property type="entry name" value="P-loop containing nucleotide triphosphate hydrolases"/>
    <property type="match status" value="1"/>
</dbReference>
<dbReference type="InterPro" id="IPR041839">
    <property type="entry name" value="Arl6"/>
</dbReference>
<dbReference type="InterPro" id="IPR027417">
    <property type="entry name" value="P-loop_NTPase"/>
</dbReference>
<dbReference type="InterPro" id="IPR005225">
    <property type="entry name" value="Small_GTP-bd"/>
</dbReference>
<dbReference type="InterPro" id="IPR024156">
    <property type="entry name" value="Small_GTPase_ARF"/>
</dbReference>
<dbReference type="InterPro" id="IPR006689">
    <property type="entry name" value="Small_GTPase_ARF/SAR"/>
</dbReference>
<dbReference type="NCBIfam" id="TIGR00231">
    <property type="entry name" value="small_GTP"/>
    <property type="match status" value="1"/>
</dbReference>
<dbReference type="PANTHER" id="PTHR11711">
    <property type="entry name" value="ADP RIBOSYLATION FACTOR-RELATED"/>
    <property type="match status" value="1"/>
</dbReference>
<dbReference type="Pfam" id="PF00025">
    <property type="entry name" value="Arf"/>
    <property type="match status" value="1"/>
</dbReference>
<dbReference type="PRINTS" id="PR00328">
    <property type="entry name" value="SAR1GTPBP"/>
</dbReference>
<dbReference type="SMART" id="SM00177">
    <property type="entry name" value="ARF"/>
    <property type="match status" value="1"/>
</dbReference>
<dbReference type="SMART" id="SM00175">
    <property type="entry name" value="RAB"/>
    <property type="match status" value="1"/>
</dbReference>
<dbReference type="SMART" id="SM00178">
    <property type="entry name" value="SAR"/>
    <property type="match status" value="1"/>
</dbReference>
<dbReference type="SUPFAM" id="SSF52540">
    <property type="entry name" value="P-loop containing nucleoside triphosphate hydrolases"/>
    <property type="match status" value="1"/>
</dbReference>
<dbReference type="PROSITE" id="PS51417">
    <property type="entry name" value="ARF"/>
    <property type="match status" value="1"/>
</dbReference>
<sequence>MGFFSSLSSLFGLGKKDVNIVVVGLDNSGKTTILNQLKTPETRSQQIVPTVGHVVTNFSTQNLSFHAFDMAGQMKYRSTWESYFHSSQGVIFVLDSSDRLRMELLKDELMMVMEHKDVVSRGIPIVILANKMDIPGAMTASDITVALGLNLYRSGTWSIHSTCALTGDGLDKAMQQLSAEITKYMESRRT</sequence>
<proteinExistence type="evidence at transcript level"/>
<keyword id="KW-0963">Cytoplasm</keyword>
<keyword id="KW-0342">GTP-binding</keyword>
<keyword id="KW-0449">Lipoprotein</keyword>
<keyword id="KW-0519">Myristate</keyword>
<keyword id="KW-0547">Nucleotide-binding</keyword>
<keyword id="KW-1185">Reference proteome</keyword>
<feature type="initiator methionine" description="Removed" evidence="3">
    <location>
        <position position="1"/>
    </location>
</feature>
<feature type="chain" id="PRO_0000262959" description="ADP-ribosylation factor-like protein 6">
    <location>
        <begin position="2"/>
        <end position="190"/>
    </location>
</feature>
<feature type="binding site" evidence="1">
    <location>
        <begin position="24"/>
        <end position="31"/>
    </location>
    <ligand>
        <name>GTP</name>
        <dbReference type="ChEBI" id="CHEBI:37565"/>
    </ligand>
</feature>
<feature type="binding site" evidence="1">
    <location>
        <begin position="69"/>
        <end position="73"/>
    </location>
    <ligand>
        <name>GTP</name>
        <dbReference type="ChEBI" id="CHEBI:37565"/>
    </ligand>
</feature>
<feature type="binding site" evidence="2">
    <location>
        <begin position="130"/>
        <end position="133"/>
    </location>
    <ligand>
        <name>GTP</name>
        <dbReference type="ChEBI" id="CHEBI:37565"/>
    </ligand>
</feature>
<feature type="lipid moiety-binding region" description="N-myristoyl glycine" evidence="3">
    <location>
        <position position="2"/>
    </location>
</feature>
<protein>
    <recommendedName>
        <fullName>ADP-ribosylation factor-like protein 6</fullName>
    </recommendedName>
</protein>
<comment type="subcellular location">
    <subcellularLocation>
        <location evidence="4">Cytoplasm</location>
    </subcellularLocation>
</comment>
<comment type="tissue specificity">
    <text evidence="4">Specifically expressed in ciliated cells.</text>
</comment>
<comment type="similarity">
    <text evidence="3">Belongs to the small GTPase superfamily. Arf family.</text>
</comment>
<evidence type="ECO:0000250" key="1"/>
<evidence type="ECO:0000250" key="2">
    <source>
        <dbReference type="UniProtKB" id="Q9D0J4"/>
    </source>
</evidence>
<evidence type="ECO:0000255" key="3"/>
<evidence type="ECO:0000269" key="4">
    <source>
    </source>
</evidence>
<evidence type="ECO:0000305" key="5"/>
<evidence type="ECO:0000312" key="6">
    <source>
        <dbReference type="EMBL" id="CAA86319.1"/>
    </source>
</evidence>
<accession>Q18510</accession>
<organism>
    <name type="scientific">Caenorhabditis elegans</name>
    <dbReference type="NCBI Taxonomy" id="6239"/>
    <lineage>
        <taxon>Eukaryota</taxon>
        <taxon>Metazoa</taxon>
        <taxon>Ecdysozoa</taxon>
        <taxon>Nematoda</taxon>
        <taxon>Chromadorea</taxon>
        <taxon>Rhabditida</taxon>
        <taxon>Rhabditina</taxon>
        <taxon>Rhabditomorpha</taxon>
        <taxon>Rhabditoidea</taxon>
        <taxon>Rhabditidae</taxon>
        <taxon>Peloderinae</taxon>
        <taxon>Caenorhabditis</taxon>
    </lineage>
</organism>
<reference evidence="6" key="1">
    <citation type="journal article" date="1998" name="Science">
        <title>Genome sequence of the nematode C. elegans: a platform for investigating biology.</title>
        <authorList>
            <consortium name="The C. elegans sequencing consortium"/>
        </authorList>
    </citation>
    <scope>NUCLEOTIDE SEQUENCE [LARGE SCALE GENOMIC DNA]</scope>
    <source>
        <strain>Bristol N2</strain>
    </source>
</reference>
<reference evidence="5" key="2">
    <citation type="journal article" date="2004" name="Nat. Genet.">
        <title>Mutations in a member of the Ras superfamily of small GTP-binding proteins causes Bardet-Biedl syndrome.</title>
        <authorList>
            <person name="Fan Y."/>
            <person name="Esmail M.A."/>
            <person name="Ansley S.J."/>
            <person name="Blacque O.E."/>
            <person name="Boroevich K."/>
            <person name="Ross A.J."/>
            <person name="Moore S.J."/>
            <person name="Badano J.L."/>
            <person name="May-Simera H."/>
            <person name="Compton D.S."/>
            <person name="Green J.S."/>
            <person name="Lewis R.A."/>
            <person name="van Haelst M.M."/>
            <person name="Parfrey P.S."/>
            <person name="Baillie D.L."/>
            <person name="Beales P.L."/>
            <person name="Katsanis N."/>
            <person name="Davidson W.S."/>
            <person name="Leroux M.R."/>
        </authorList>
    </citation>
    <scope>SUBCELLULAR LOCATION</scope>
    <scope>TISSUE SPECIFICITY</scope>
</reference>
<gene>
    <name evidence="6" type="primary">arl-6</name>
    <name type="ORF">C38D4.8</name>
</gene>
<name>ARL6_CAEEL</name>